<evidence type="ECO:0000255" key="1">
    <source>
        <dbReference type="HAMAP-Rule" id="MF_01657"/>
    </source>
</evidence>
<organism>
    <name type="scientific">Rhodococcus jostii (strain RHA1)</name>
    <dbReference type="NCBI Taxonomy" id="101510"/>
    <lineage>
        <taxon>Bacteria</taxon>
        <taxon>Bacillati</taxon>
        <taxon>Actinomycetota</taxon>
        <taxon>Actinomycetes</taxon>
        <taxon>Mycobacteriales</taxon>
        <taxon>Nocardiaceae</taxon>
        <taxon>Rhodococcus</taxon>
    </lineage>
</organism>
<name>ACDH3_RHOJR</name>
<keyword id="KW-0058">Aromatic hydrocarbons catabolism</keyword>
<keyword id="KW-0520">NAD</keyword>
<keyword id="KW-0560">Oxidoreductase</keyword>
<sequence>MTKASVAIVGSGNISTDLLYKLQRSEWLEPRWMIGIDPESEGLARARKLGLETSAEGVDWLLNQPEKPDLVFEATSAYVHREAAPRYEAAGIRAVDLTPAAVGPAVVPPANLREHLGAPNVNMITCGGQATIPIVYAVSRVVDVPYAEIVASVASVSAGPGTRANIDEFTKTTSRGIETIGGAQRGKAIIILNPADPPMIMRDTIFCAIPEDADRAAITDSIHRVVADIQQYVPGYRLLNEPQFDDPSVVSGGQATVTTFVEVEGAGDFLPPYAGNLDIMTAAATKVGEEIAQKLLSVEA</sequence>
<feature type="chain" id="PRO_0000387728" description="Acetaldehyde dehydrogenase 3">
    <location>
        <begin position="1"/>
        <end position="300"/>
    </location>
</feature>
<feature type="active site" description="Acyl-thioester intermediate" evidence="1">
    <location>
        <position position="126"/>
    </location>
</feature>
<feature type="binding site" evidence="1">
    <location>
        <begin position="11"/>
        <end position="14"/>
    </location>
    <ligand>
        <name>NAD(+)</name>
        <dbReference type="ChEBI" id="CHEBI:57540"/>
    </ligand>
</feature>
<feature type="binding site" evidence="1">
    <location>
        <begin position="157"/>
        <end position="165"/>
    </location>
    <ligand>
        <name>NAD(+)</name>
        <dbReference type="ChEBI" id="CHEBI:57540"/>
    </ligand>
</feature>
<feature type="binding site" evidence="1">
    <location>
        <position position="276"/>
    </location>
    <ligand>
        <name>NAD(+)</name>
        <dbReference type="ChEBI" id="CHEBI:57540"/>
    </ligand>
</feature>
<reference key="1">
    <citation type="journal article" date="2006" name="Proc. Natl. Acad. Sci. U.S.A.">
        <title>The complete genome of Rhodococcus sp. RHA1 provides insights into a catabolic powerhouse.</title>
        <authorList>
            <person name="McLeod M.P."/>
            <person name="Warren R.L."/>
            <person name="Hsiao W.W.L."/>
            <person name="Araki N."/>
            <person name="Myhre M."/>
            <person name="Fernandes C."/>
            <person name="Miyazawa D."/>
            <person name="Wong W."/>
            <person name="Lillquist A.L."/>
            <person name="Wang D."/>
            <person name="Dosanjh M."/>
            <person name="Hara H."/>
            <person name="Petrescu A."/>
            <person name="Morin R.D."/>
            <person name="Yang G."/>
            <person name="Stott J.M."/>
            <person name="Schein J.E."/>
            <person name="Shin H."/>
            <person name="Smailus D."/>
            <person name="Siddiqui A.S."/>
            <person name="Marra M.A."/>
            <person name="Jones S.J.M."/>
            <person name="Holt R."/>
            <person name="Brinkman F.S.L."/>
            <person name="Miyauchi K."/>
            <person name="Fukuda M."/>
            <person name="Davies J.E."/>
            <person name="Mohn W.W."/>
            <person name="Eltis L.D."/>
        </authorList>
    </citation>
    <scope>NUCLEOTIDE SEQUENCE [LARGE SCALE GENOMIC DNA]</scope>
    <source>
        <strain>RHA1</strain>
    </source>
</reference>
<accession>Q0S816</accession>
<comment type="catalytic activity">
    <reaction evidence="1">
        <text>acetaldehyde + NAD(+) + CoA = acetyl-CoA + NADH + H(+)</text>
        <dbReference type="Rhea" id="RHEA:23288"/>
        <dbReference type="ChEBI" id="CHEBI:15343"/>
        <dbReference type="ChEBI" id="CHEBI:15378"/>
        <dbReference type="ChEBI" id="CHEBI:57287"/>
        <dbReference type="ChEBI" id="CHEBI:57288"/>
        <dbReference type="ChEBI" id="CHEBI:57540"/>
        <dbReference type="ChEBI" id="CHEBI:57945"/>
        <dbReference type="EC" id="1.2.1.10"/>
    </reaction>
</comment>
<comment type="similarity">
    <text evidence="1">Belongs to the acetaldehyde dehydrogenase family.</text>
</comment>
<gene>
    <name type="primary">hsaG</name>
    <name type="ordered locus">RHA1_ro04534</name>
</gene>
<protein>
    <recommendedName>
        <fullName evidence="1">Acetaldehyde dehydrogenase 3</fullName>
        <ecNumber evidence="1">1.2.1.10</ecNumber>
    </recommendedName>
    <alternativeName>
        <fullName evidence="1">Acetaldehyde dehydrogenase [acetylating] 3</fullName>
    </alternativeName>
</protein>
<proteinExistence type="inferred from homology"/>
<dbReference type="EC" id="1.2.1.10" evidence="1"/>
<dbReference type="EMBL" id="CP000431">
    <property type="protein sequence ID" value="ABG96320.1"/>
    <property type="molecule type" value="Genomic_DNA"/>
</dbReference>
<dbReference type="RefSeq" id="WP_009477595.1">
    <property type="nucleotide sequence ID" value="NC_008268.1"/>
</dbReference>
<dbReference type="SMR" id="Q0S816"/>
<dbReference type="KEGG" id="rha:RHA1_ro04534"/>
<dbReference type="eggNOG" id="COG4569">
    <property type="taxonomic scope" value="Bacteria"/>
</dbReference>
<dbReference type="HOGENOM" id="CLU_062208_0_0_11"/>
<dbReference type="OrthoDB" id="9786743at2"/>
<dbReference type="BioCyc" id="MetaCyc:MONOMER-16914"/>
<dbReference type="Proteomes" id="UP000008710">
    <property type="component" value="Chromosome"/>
</dbReference>
<dbReference type="GO" id="GO:0008774">
    <property type="term" value="F:acetaldehyde dehydrogenase (acetylating) activity"/>
    <property type="evidence" value="ECO:0007669"/>
    <property type="project" value="UniProtKB-UniRule"/>
</dbReference>
<dbReference type="GO" id="GO:0051287">
    <property type="term" value="F:NAD binding"/>
    <property type="evidence" value="ECO:0007669"/>
    <property type="project" value="UniProtKB-UniRule"/>
</dbReference>
<dbReference type="GO" id="GO:0009056">
    <property type="term" value="P:catabolic process"/>
    <property type="evidence" value="ECO:0007669"/>
    <property type="project" value="UniProtKB-KW"/>
</dbReference>
<dbReference type="CDD" id="cd23933">
    <property type="entry name" value="ALDH_C"/>
    <property type="match status" value="1"/>
</dbReference>
<dbReference type="Gene3D" id="3.30.360.10">
    <property type="entry name" value="Dihydrodipicolinate Reductase, domain 2"/>
    <property type="match status" value="1"/>
</dbReference>
<dbReference type="Gene3D" id="3.40.50.720">
    <property type="entry name" value="NAD(P)-binding Rossmann-like Domain"/>
    <property type="match status" value="1"/>
</dbReference>
<dbReference type="HAMAP" id="MF_01657">
    <property type="entry name" value="Ac_ald_DH_ac"/>
    <property type="match status" value="1"/>
</dbReference>
<dbReference type="InterPro" id="IPR003361">
    <property type="entry name" value="Acetaldehyde_dehydrogenase"/>
</dbReference>
<dbReference type="InterPro" id="IPR015426">
    <property type="entry name" value="Acetylaldehyde_DH_C"/>
</dbReference>
<dbReference type="InterPro" id="IPR036291">
    <property type="entry name" value="NAD(P)-bd_dom_sf"/>
</dbReference>
<dbReference type="InterPro" id="IPR000534">
    <property type="entry name" value="Semialdehyde_DH_NAD-bd"/>
</dbReference>
<dbReference type="NCBIfam" id="TIGR03215">
    <property type="entry name" value="ac_ald_DH_ac"/>
    <property type="match status" value="1"/>
</dbReference>
<dbReference type="NCBIfam" id="NF006157">
    <property type="entry name" value="PRK08300.1"/>
    <property type="match status" value="1"/>
</dbReference>
<dbReference type="Pfam" id="PF09290">
    <property type="entry name" value="AcetDehyd-dimer"/>
    <property type="match status" value="1"/>
</dbReference>
<dbReference type="PIRSF" id="PIRSF015689">
    <property type="entry name" value="Actaldh_dh_actl"/>
    <property type="match status" value="1"/>
</dbReference>
<dbReference type="SMART" id="SM00859">
    <property type="entry name" value="Semialdhyde_dh"/>
    <property type="match status" value="1"/>
</dbReference>
<dbReference type="SUPFAM" id="SSF55347">
    <property type="entry name" value="Glyceraldehyde-3-phosphate dehydrogenase-like, C-terminal domain"/>
    <property type="match status" value="1"/>
</dbReference>
<dbReference type="SUPFAM" id="SSF51735">
    <property type="entry name" value="NAD(P)-binding Rossmann-fold domains"/>
    <property type="match status" value="1"/>
</dbReference>